<protein>
    <recommendedName>
        <fullName evidence="7">Diadenosine 5',5'''-P1,P4-tetraphosphate phosphorylase 2</fullName>
        <shortName>Ap4A phosphorylase 2</shortName>
        <ecNumber evidence="3">2.7.7.53</ecNumber>
    </recommendedName>
    <alternativeName>
        <fullName evidence="9">ADP-sulfurylase</fullName>
        <ecNumber evidence="3">2.7.7.5</ecNumber>
    </alternativeName>
    <alternativeName>
        <fullName>ATP adenylyltransferase</fullName>
    </alternativeName>
</protein>
<feature type="chain" id="PRO_0000064613" description="Diadenosine 5',5'''-P1,P4-tetraphosphate phosphorylase 2">
    <location>
        <begin position="1"/>
        <end position="325"/>
    </location>
</feature>
<feature type="active site" description="Nucleophile" evidence="4">
    <location>
        <position position="161"/>
    </location>
</feature>
<feature type="binding site" evidence="4">
    <location>
        <position position="53"/>
    </location>
    <ligand>
        <name>substrate</name>
    </ligand>
</feature>
<feature type="binding site" evidence="4">
    <location>
        <begin position="92"/>
        <end position="93"/>
    </location>
    <ligand>
        <name>substrate</name>
    </ligand>
</feature>
<feature type="binding site" evidence="4">
    <location>
        <position position="148"/>
    </location>
    <ligand>
        <name>substrate</name>
    </ligand>
</feature>
<feature type="binding site" evidence="4">
    <location>
        <begin position="154"/>
        <end position="157"/>
    </location>
    <ligand>
        <name>substrate</name>
    </ligand>
</feature>
<feature type="binding site" evidence="4">
    <location>
        <position position="163"/>
    </location>
    <ligand>
        <name>substrate</name>
    </ligand>
</feature>
<feature type="binding site" evidence="4">
    <location>
        <begin position="277"/>
        <end position="279"/>
    </location>
    <ligand>
        <name>substrate</name>
    </ligand>
</feature>
<feature type="binding site" evidence="4">
    <location>
        <position position="284"/>
    </location>
    <ligand>
        <name>substrate</name>
    </ligand>
</feature>
<feature type="binding site" evidence="4">
    <location>
        <position position="288"/>
    </location>
    <ligand>
        <name>substrate</name>
    </ligand>
</feature>
<feature type="mutagenesis site" description="Completely abolishes catalytic activity." evidence="4">
    <original>H</original>
    <variation>A</variation>
    <location>
        <position position="161"/>
    </location>
</feature>
<feature type="helix" evidence="11">
    <location>
        <begin position="6"/>
        <end position="19"/>
    </location>
</feature>
<feature type="strand" evidence="13">
    <location>
        <begin position="21"/>
        <end position="23"/>
    </location>
</feature>
<feature type="strand" evidence="11">
    <location>
        <begin position="29"/>
        <end position="34"/>
    </location>
</feature>
<feature type="turn" evidence="11">
    <location>
        <begin position="36"/>
        <end position="38"/>
    </location>
</feature>
<feature type="strand" evidence="11">
    <location>
        <begin position="41"/>
        <end position="46"/>
    </location>
</feature>
<feature type="helix" evidence="11">
    <location>
        <begin position="48"/>
        <end position="51"/>
    </location>
</feature>
<feature type="turn" evidence="11">
    <location>
        <begin position="67"/>
        <end position="69"/>
    </location>
</feature>
<feature type="helix" evidence="11">
    <location>
        <begin position="73"/>
        <end position="75"/>
    </location>
</feature>
<feature type="strand" evidence="11">
    <location>
        <begin position="76"/>
        <end position="79"/>
    </location>
</feature>
<feature type="strand" evidence="11">
    <location>
        <begin position="81"/>
        <end position="91"/>
    </location>
</feature>
<feature type="strand" evidence="11">
    <location>
        <begin position="101"/>
        <end position="107"/>
    </location>
</feature>
<feature type="helix" evidence="11">
    <location>
        <begin position="117"/>
        <end position="130"/>
    </location>
</feature>
<feature type="strand" evidence="11">
    <location>
        <begin position="137"/>
        <end position="139"/>
    </location>
</feature>
<feature type="strand" evidence="11">
    <location>
        <begin position="143"/>
        <end position="150"/>
    </location>
</feature>
<feature type="turn" evidence="11">
    <location>
        <begin position="151"/>
        <end position="154"/>
    </location>
</feature>
<feature type="strand" evidence="11">
    <location>
        <begin position="161"/>
        <end position="166"/>
    </location>
</feature>
<feature type="helix" evidence="11">
    <location>
        <begin position="174"/>
        <end position="179"/>
    </location>
</feature>
<feature type="strand" evidence="12">
    <location>
        <begin position="188"/>
        <end position="190"/>
    </location>
</feature>
<feature type="strand" evidence="11">
    <location>
        <begin position="197"/>
        <end position="201"/>
    </location>
</feature>
<feature type="strand" evidence="11">
    <location>
        <begin position="204"/>
        <end position="207"/>
    </location>
</feature>
<feature type="helix" evidence="11">
    <location>
        <begin position="212"/>
        <end position="214"/>
    </location>
</feature>
<feature type="helix" evidence="11">
    <location>
        <begin position="217"/>
        <end position="232"/>
    </location>
</feature>
<feature type="turn" evidence="11">
    <location>
        <begin position="233"/>
        <end position="235"/>
    </location>
</feature>
<feature type="strand" evidence="11">
    <location>
        <begin position="249"/>
        <end position="253"/>
    </location>
</feature>
<feature type="strand" evidence="11">
    <location>
        <begin position="255"/>
        <end position="264"/>
    </location>
</feature>
<feature type="turn" evidence="11">
    <location>
        <begin position="270"/>
        <end position="272"/>
    </location>
</feature>
<feature type="helix" evidence="11">
    <location>
        <begin position="278"/>
        <end position="282"/>
    </location>
</feature>
<feature type="strand" evidence="11">
    <location>
        <begin position="284"/>
        <end position="287"/>
    </location>
</feature>
<feature type="helix" evidence="11">
    <location>
        <begin position="290"/>
        <end position="298"/>
    </location>
</feature>
<feature type="helix" evidence="11">
    <location>
        <begin position="301"/>
        <end position="310"/>
    </location>
</feature>
<feature type="helix" evidence="11">
    <location>
        <begin position="320"/>
        <end position="322"/>
    </location>
</feature>
<name>APA2_YEAST</name>
<organism>
    <name type="scientific">Saccharomyces cerevisiae (strain ATCC 204508 / S288c)</name>
    <name type="common">Baker's yeast</name>
    <dbReference type="NCBI Taxonomy" id="559292"/>
    <lineage>
        <taxon>Eukaryota</taxon>
        <taxon>Fungi</taxon>
        <taxon>Dikarya</taxon>
        <taxon>Ascomycota</taxon>
        <taxon>Saccharomycotina</taxon>
        <taxon>Saccharomycetes</taxon>
        <taxon>Saccharomycetales</taxon>
        <taxon>Saccharomycetaceae</taxon>
        <taxon>Saccharomyces</taxon>
    </lineage>
</organism>
<sequence>MIEENLKQKIHDKFVAAKKNGHLKVTHAESKKLKDPQTTTQYWVTFAPSLALKPDANKNSDSKAEDPFANPDEELVVTEDLNGDGEYKLLLNKFPVVPEHSLLVTSEFKDQRSALTPSDLMTAYNVLCSLQGDKDDDVTCERYLVFYNCGPHSGSSQDHKHLQIMQMPEKFIPFQDVLCNGKDHFLPTFNAEPLQDDKVSFAHFVLPLPESSDQVDEDLLAMCYVSLMQRALTFFQDWTNESPELTKSYNVLLTKKWICVVPRSHAKSGPPLMLNINSTGYCGMILVKDREKLENLTEDPHLVDKSLLQCGFPNTAGQKPTEYHY</sequence>
<proteinExistence type="evidence at protein level"/>
<evidence type="ECO:0000269" key="1">
    <source>
    </source>
</evidence>
<evidence type="ECO:0000269" key="2">
    <source>
    </source>
</evidence>
<evidence type="ECO:0000269" key="3">
    <source>
    </source>
</evidence>
<evidence type="ECO:0000269" key="4">
    <source>
    </source>
</evidence>
<evidence type="ECO:0000269" key="5">
    <source>
    </source>
</evidence>
<evidence type="ECO:0000269" key="6">
    <source>
    </source>
</evidence>
<evidence type="ECO:0000303" key="7">
    <source>
    </source>
</evidence>
<evidence type="ECO:0000305" key="8"/>
<evidence type="ECO:0000305" key="9">
    <source>
    </source>
</evidence>
<evidence type="ECO:0000312" key="10">
    <source>
        <dbReference type="SGD" id="S000002938"/>
    </source>
</evidence>
<evidence type="ECO:0007829" key="11">
    <source>
        <dbReference type="PDB" id="4I5T"/>
    </source>
</evidence>
<evidence type="ECO:0007829" key="12">
    <source>
        <dbReference type="PDB" id="4I5V"/>
    </source>
</evidence>
<evidence type="ECO:0007829" key="13">
    <source>
        <dbReference type="PDB" id="4I5W"/>
    </source>
</evidence>
<gene>
    <name evidence="7" type="primary">APA2</name>
    <name evidence="10" type="ordered locus">YDR530C</name>
    <name type="ORF">D9719.33</name>
</gene>
<reference key="1">
    <citation type="journal article" date="1990" name="J. Bacteriol.">
        <title>Catabolism of bis(5'-nucleosidyl) tetraphosphates in Saccharomyces cerevisiae.</title>
        <authorList>
            <person name="Plateau P."/>
            <person name="Fromant M."/>
            <person name="Schmitter J.-M."/>
            <person name="Blanquet S."/>
        </authorList>
    </citation>
    <scope>NUCLEOTIDE SEQUENCE [GENOMIC DNA]</scope>
    <scope>PROTEIN SEQUENCE OF 1-11</scope>
    <scope>FUNCTION</scope>
    <scope>CATALYTIC ACTIVITY</scope>
    <scope>COFACTOR</scope>
    <scope>SUBUNIT</scope>
    <scope>SUBSTRATE SPECIFICITY</scope>
    <scope>DISRUPTION PHENOTYPE</scope>
    <source>
        <strain>YPAL16</strain>
    </source>
</reference>
<reference key="2">
    <citation type="journal article" date="1997" name="Nature">
        <title>The nucleotide sequence of Saccharomyces cerevisiae chromosome IV.</title>
        <authorList>
            <person name="Jacq C."/>
            <person name="Alt-Moerbe J."/>
            <person name="Andre B."/>
            <person name="Arnold W."/>
            <person name="Bahr A."/>
            <person name="Ballesta J.P.G."/>
            <person name="Bargues M."/>
            <person name="Baron L."/>
            <person name="Becker A."/>
            <person name="Biteau N."/>
            <person name="Bloecker H."/>
            <person name="Blugeon C."/>
            <person name="Boskovic J."/>
            <person name="Brandt P."/>
            <person name="Brueckner M."/>
            <person name="Buitrago M.J."/>
            <person name="Coster F."/>
            <person name="Delaveau T."/>
            <person name="del Rey F."/>
            <person name="Dujon B."/>
            <person name="Eide L.G."/>
            <person name="Garcia-Cantalejo J.M."/>
            <person name="Goffeau A."/>
            <person name="Gomez-Peris A."/>
            <person name="Granotier C."/>
            <person name="Hanemann V."/>
            <person name="Hankeln T."/>
            <person name="Hoheisel J.D."/>
            <person name="Jaeger W."/>
            <person name="Jimenez A."/>
            <person name="Jonniaux J.-L."/>
            <person name="Kraemer C."/>
            <person name="Kuester H."/>
            <person name="Laamanen P."/>
            <person name="Legros Y."/>
            <person name="Louis E.J."/>
            <person name="Moeller-Rieker S."/>
            <person name="Monnet A."/>
            <person name="Moro M."/>
            <person name="Mueller-Auer S."/>
            <person name="Nussbaumer B."/>
            <person name="Paricio N."/>
            <person name="Paulin L."/>
            <person name="Perea J."/>
            <person name="Perez-Alonso M."/>
            <person name="Perez-Ortin J.E."/>
            <person name="Pohl T.M."/>
            <person name="Prydz H."/>
            <person name="Purnelle B."/>
            <person name="Rasmussen S.W."/>
            <person name="Remacha M.A."/>
            <person name="Revuelta J.L."/>
            <person name="Rieger M."/>
            <person name="Salom D."/>
            <person name="Saluz H.P."/>
            <person name="Saiz J.E."/>
            <person name="Saren A.-M."/>
            <person name="Schaefer M."/>
            <person name="Scharfe M."/>
            <person name="Schmidt E.R."/>
            <person name="Schneider C."/>
            <person name="Scholler P."/>
            <person name="Schwarz S."/>
            <person name="Soler-Mira A."/>
            <person name="Urrestarazu L.A."/>
            <person name="Verhasselt P."/>
            <person name="Vissers S."/>
            <person name="Voet M."/>
            <person name="Volckaert G."/>
            <person name="Wagner G."/>
            <person name="Wambutt R."/>
            <person name="Wedler E."/>
            <person name="Wedler H."/>
            <person name="Woelfl S."/>
            <person name="Harris D.E."/>
            <person name="Bowman S."/>
            <person name="Brown D."/>
            <person name="Churcher C.M."/>
            <person name="Connor R."/>
            <person name="Dedman K."/>
            <person name="Gentles S."/>
            <person name="Hamlin N."/>
            <person name="Hunt S."/>
            <person name="Jones L."/>
            <person name="McDonald S."/>
            <person name="Murphy L.D."/>
            <person name="Niblett D."/>
            <person name="Odell C."/>
            <person name="Oliver K."/>
            <person name="Rajandream M.A."/>
            <person name="Richards C."/>
            <person name="Shore L."/>
            <person name="Walsh S.V."/>
            <person name="Barrell B.G."/>
            <person name="Dietrich F.S."/>
            <person name="Mulligan J.T."/>
            <person name="Allen E."/>
            <person name="Araujo R."/>
            <person name="Aviles E."/>
            <person name="Berno A."/>
            <person name="Carpenter J."/>
            <person name="Chen E."/>
            <person name="Cherry J.M."/>
            <person name="Chung E."/>
            <person name="Duncan M."/>
            <person name="Hunicke-Smith S."/>
            <person name="Hyman R.W."/>
            <person name="Komp C."/>
            <person name="Lashkari D."/>
            <person name="Lew H."/>
            <person name="Lin D."/>
            <person name="Mosedale D."/>
            <person name="Nakahara K."/>
            <person name="Namath A."/>
            <person name="Oefner P."/>
            <person name="Oh C."/>
            <person name="Petel F.X."/>
            <person name="Roberts D."/>
            <person name="Schramm S."/>
            <person name="Schroeder M."/>
            <person name="Shogren T."/>
            <person name="Shroff N."/>
            <person name="Winant A."/>
            <person name="Yelton M.A."/>
            <person name="Botstein D."/>
            <person name="Davis R.W."/>
            <person name="Johnston M."/>
            <person name="Andrews S."/>
            <person name="Brinkman R."/>
            <person name="Cooper J."/>
            <person name="Ding H."/>
            <person name="Du Z."/>
            <person name="Favello A."/>
            <person name="Fulton L."/>
            <person name="Gattung S."/>
            <person name="Greco T."/>
            <person name="Hallsworth K."/>
            <person name="Hawkins J."/>
            <person name="Hillier L.W."/>
            <person name="Jier M."/>
            <person name="Johnson D."/>
            <person name="Johnston L."/>
            <person name="Kirsten J."/>
            <person name="Kucaba T."/>
            <person name="Langston Y."/>
            <person name="Latreille P."/>
            <person name="Le T."/>
            <person name="Mardis E."/>
            <person name="Menezes S."/>
            <person name="Miller N."/>
            <person name="Nhan M."/>
            <person name="Pauley A."/>
            <person name="Peluso D."/>
            <person name="Rifkin L."/>
            <person name="Riles L."/>
            <person name="Taich A."/>
            <person name="Trevaskis E."/>
            <person name="Vignati D."/>
            <person name="Wilcox L."/>
            <person name="Wohldman P."/>
            <person name="Vaudin M."/>
            <person name="Wilson R."/>
            <person name="Waterston R."/>
            <person name="Albermann K."/>
            <person name="Hani J."/>
            <person name="Heumann K."/>
            <person name="Kleine K."/>
            <person name="Mewes H.-W."/>
            <person name="Zollner A."/>
            <person name="Zaccaria P."/>
        </authorList>
    </citation>
    <scope>NUCLEOTIDE SEQUENCE [LARGE SCALE GENOMIC DNA]</scope>
    <source>
        <strain>ATCC 204508 / S288c</strain>
    </source>
</reference>
<reference key="3">
    <citation type="journal article" date="2014" name="G3 (Bethesda)">
        <title>The reference genome sequence of Saccharomyces cerevisiae: Then and now.</title>
        <authorList>
            <person name="Engel S.R."/>
            <person name="Dietrich F.S."/>
            <person name="Fisk D.G."/>
            <person name="Binkley G."/>
            <person name="Balakrishnan R."/>
            <person name="Costanzo M.C."/>
            <person name="Dwight S.S."/>
            <person name="Hitz B.C."/>
            <person name="Karra K."/>
            <person name="Nash R.S."/>
            <person name="Weng S."/>
            <person name="Wong E.D."/>
            <person name="Lloyd P."/>
            <person name="Skrzypek M.S."/>
            <person name="Miyasato S.R."/>
            <person name="Simison M."/>
            <person name="Cherry J.M."/>
        </authorList>
    </citation>
    <scope>GENOME REANNOTATION</scope>
    <source>
        <strain>ATCC 204508 / S288c</strain>
    </source>
</reference>
<reference key="4">
    <citation type="journal article" date="1985" name="J. Biol. Chem.">
        <title>Phosphorolytic cleavage of diadenosine 5',5'''-P1,P4-tetraphosphate. Properties of homogeneous diadenosine 5',5'''-P1,P4-tetraphosphate alpha, beta-phosphorylase from Saccharomyces cerevisiae.</title>
        <authorList>
            <person name="Guranowski A."/>
            <person name="Blanquet S."/>
        </authorList>
    </citation>
    <scope>CATALYTIC ACTIVITY</scope>
</reference>
<reference key="5">
    <citation type="journal article" date="1989" name="J. Bacteriol.">
        <title>Isolation, characterization, and inactivation of the APA1 gene encoding yeast diadenosine 5',5'''-P1,P4-tetraphosphate phosphorylase.</title>
        <authorList>
            <person name="Plateau P."/>
            <person name="Fromant M."/>
            <person name="Schmitter J.-M."/>
            <person name="Buhler J.-M."/>
            <person name="Blanquet S."/>
        </authorList>
    </citation>
    <scope>CATALYTIC ACTIVITY</scope>
</reference>
<reference key="6">
    <citation type="journal article" date="2003" name="Nature">
        <title>Global analysis of protein localization in budding yeast.</title>
        <authorList>
            <person name="Huh W.-K."/>
            <person name="Falvo J.V."/>
            <person name="Gerke L.C."/>
            <person name="Carroll A.S."/>
            <person name="Howson R.W."/>
            <person name="Weissman J.S."/>
            <person name="O'Shea E.K."/>
        </authorList>
    </citation>
    <scope>SUBCELLULAR LOCATION [LARGE SCALE ANALYSIS]</scope>
</reference>
<reference key="7">
    <citation type="journal article" date="2003" name="Nature">
        <title>Global analysis of protein expression in yeast.</title>
        <authorList>
            <person name="Ghaemmaghami S."/>
            <person name="Huh W.-K."/>
            <person name="Bower K."/>
            <person name="Howson R.W."/>
            <person name="Belle A."/>
            <person name="Dephoure N."/>
            <person name="O'Shea E.K."/>
            <person name="Weissman J.S."/>
        </authorList>
    </citation>
    <scope>LEVEL OF PROTEIN EXPRESSION [LARGE SCALE ANALYSIS]</scope>
</reference>
<reference key="8">
    <citation type="journal article" date="2013" name="J. Mol. Biol.">
        <title>Structures of yeast Apa2 reveal catalytic insights into a canonical AP(4)A phosphorylase of the histidine triad superfamily.</title>
        <authorList>
            <person name="Hou W.T."/>
            <person name="Li W.Z."/>
            <person name="Chen Y."/>
            <person name="Jiang Y.L."/>
            <person name="Zhou C.Z."/>
        </authorList>
    </citation>
    <scope>X-RAY CRYSTALLOGRAPHY (2.30 ANGSTROMS) IN COMPLEX WITH AMP AND SUBSTRATE</scope>
    <scope>BIOPHYSICOCHEMICAL PROPERTIES</scope>
    <scope>COFACTOR</scope>
    <scope>SUBUNIT</scope>
    <scope>MUTAGENESIS OF HIS-161</scope>
    <scope>ACTIVE SITE</scope>
</reference>
<accession>P22108</accession>
<accession>D6VTF1</accession>
<dbReference type="EC" id="2.7.7.53" evidence="3"/>
<dbReference type="EC" id="2.7.7.5" evidence="3"/>
<dbReference type="EMBL" id="M60265">
    <property type="protein sequence ID" value="AAA34428.1"/>
    <property type="molecule type" value="Genomic_DNA"/>
</dbReference>
<dbReference type="EMBL" id="U33057">
    <property type="protein sequence ID" value="AAB64969.1"/>
    <property type="molecule type" value="Genomic_DNA"/>
</dbReference>
<dbReference type="EMBL" id="BK006938">
    <property type="protein sequence ID" value="DAA12361.1"/>
    <property type="molecule type" value="Genomic_DNA"/>
</dbReference>
<dbReference type="PIR" id="A37836">
    <property type="entry name" value="A37836"/>
</dbReference>
<dbReference type="RefSeq" id="NP_010819.1">
    <property type="nucleotide sequence ID" value="NM_001180838.1"/>
</dbReference>
<dbReference type="PDB" id="4I5T">
    <property type="method" value="X-ray"/>
    <property type="resolution" value="2.30 A"/>
    <property type="chains" value="A/B=1-325"/>
</dbReference>
<dbReference type="PDB" id="4I5V">
    <property type="method" value="X-ray"/>
    <property type="resolution" value="2.70 A"/>
    <property type="chains" value="A/B=1-325"/>
</dbReference>
<dbReference type="PDB" id="4I5W">
    <property type="method" value="X-ray"/>
    <property type="resolution" value="2.79 A"/>
    <property type="chains" value="A/B=1-325"/>
</dbReference>
<dbReference type="PDBsum" id="4I5T"/>
<dbReference type="PDBsum" id="4I5V"/>
<dbReference type="PDBsum" id="4I5W"/>
<dbReference type="SMR" id="P22108"/>
<dbReference type="BioGRID" id="32579">
    <property type="interactions" value="131"/>
</dbReference>
<dbReference type="DIP" id="DIP-4729N"/>
<dbReference type="FunCoup" id="P22108">
    <property type="interactions" value="141"/>
</dbReference>
<dbReference type="IntAct" id="P22108">
    <property type="interactions" value="2"/>
</dbReference>
<dbReference type="STRING" id="4932.YDR530C"/>
<dbReference type="PaxDb" id="4932-YDR530C"/>
<dbReference type="PeptideAtlas" id="P22108"/>
<dbReference type="EnsemblFungi" id="YDR530C_mRNA">
    <property type="protein sequence ID" value="YDR530C"/>
    <property type="gene ID" value="YDR530C"/>
</dbReference>
<dbReference type="GeneID" id="852143"/>
<dbReference type="KEGG" id="sce:YDR530C"/>
<dbReference type="AGR" id="SGD:S000002938"/>
<dbReference type="SGD" id="S000002938">
    <property type="gene designation" value="APA2"/>
</dbReference>
<dbReference type="VEuPathDB" id="FungiDB:YDR530C"/>
<dbReference type="eggNOG" id="ENOG502QRAQ">
    <property type="taxonomic scope" value="Eukaryota"/>
</dbReference>
<dbReference type="GeneTree" id="ENSGT00940000176550"/>
<dbReference type="HOGENOM" id="CLU_049915_1_0_1"/>
<dbReference type="InParanoid" id="P22108"/>
<dbReference type="OMA" id="DPFENPP"/>
<dbReference type="OrthoDB" id="10267950at2759"/>
<dbReference type="BioCyc" id="YEAST:YDR530C-MONOMER"/>
<dbReference type="BioGRID-ORCS" id="852143">
    <property type="hits" value="0 hits in 10 CRISPR screens"/>
</dbReference>
<dbReference type="EvolutionaryTrace" id="P22108"/>
<dbReference type="PRO" id="PR:P22108"/>
<dbReference type="Proteomes" id="UP000002311">
    <property type="component" value="Chromosome IV"/>
</dbReference>
<dbReference type="RNAct" id="P22108">
    <property type="molecule type" value="protein"/>
</dbReference>
<dbReference type="GO" id="GO:0005737">
    <property type="term" value="C:cytoplasm"/>
    <property type="evidence" value="ECO:0007005"/>
    <property type="project" value="SGD"/>
</dbReference>
<dbReference type="GO" id="GO:0005634">
    <property type="term" value="C:nucleus"/>
    <property type="evidence" value="ECO:0007005"/>
    <property type="project" value="SGD"/>
</dbReference>
<dbReference type="GO" id="GO:0005524">
    <property type="term" value="F:ATP binding"/>
    <property type="evidence" value="ECO:0007669"/>
    <property type="project" value="UniProtKB-KW"/>
</dbReference>
<dbReference type="GO" id="GO:0003877">
    <property type="term" value="F:ATP:ADP adenylyltransferase activity"/>
    <property type="evidence" value="ECO:0007669"/>
    <property type="project" value="UniProtKB-EC"/>
</dbReference>
<dbReference type="GO" id="GO:0008796">
    <property type="term" value="F:bis(5'-nucleosyl)-tetraphosphatase activity"/>
    <property type="evidence" value="ECO:0000314"/>
    <property type="project" value="SGD"/>
</dbReference>
<dbReference type="GO" id="GO:0004780">
    <property type="term" value="F:sulfate adenylyltransferase (ADP) activity"/>
    <property type="evidence" value="ECO:0000318"/>
    <property type="project" value="GO_Central"/>
</dbReference>
<dbReference type="GO" id="GO:0009164">
    <property type="term" value="P:nucleoside catabolic process"/>
    <property type="evidence" value="ECO:0000314"/>
    <property type="project" value="SGD"/>
</dbReference>
<dbReference type="GO" id="GO:0009165">
    <property type="term" value="P:nucleotide biosynthetic process"/>
    <property type="evidence" value="ECO:0000318"/>
    <property type="project" value="GO_Central"/>
</dbReference>
<dbReference type="FunFam" id="3.30.428.70:FF:000001">
    <property type="entry name" value="APA1p AP4A phosphorylase"/>
    <property type="match status" value="1"/>
</dbReference>
<dbReference type="Gene3D" id="3.30.428.70">
    <property type="match status" value="1"/>
</dbReference>
<dbReference type="InterPro" id="IPR009163">
    <property type="entry name" value="Ap4A_phos1/2"/>
</dbReference>
<dbReference type="InterPro" id="IPR043171">
    <property type="entry name" value="Ap4A_phos1/2-like"/>
</dbReference>
<dbReference type="InterPro" id="IPR045759">
    <property type="entry name" value="Ap4A_phos1/2_N"/>
</dbReference>
<dbReference type="InterPro" id="IPR019200">
    <property type="entry name" value="ATP_adenylylTrfase_C"/>
</dbReference>
<dbReference type="InterPro" id="IPR053364">
    <property type="entry name" value="Fork-head_TF_regulator"/>
</dbReference>
<dbReference type="InterPro" id="IPR036265">
    <property type="entry name" value="HIT-like_sf"/>
</dbReference>
<dbReference type="PANTHER" id="PTHR42746">
    <property type="entry name" value="DIADENOSINE 5',5'''-P1,P4-TETRAPHOSPHATE PHOSPHORYLASE"/>
    <property type="match status" value="1"/>
</dbReference>
<dbReference type="PANTHER" id="PTHR42746:SF2">
    <property type="entry name" value="DIADENOSINE 5',5'''-P1,P4-TETRAPHOSPHATE PHOSPHORYLASE 2-RELATED"/>
    <property type="match status" value="1"/>
</dbReference>
<dbReference type="Pfam" id="PF19327">
    <property type="entry name" value="Ap4A_phos_N"/>
    <property type="match status" value="1"/>
</dbReference>
<dbReference type="Pfam" id="PF09830">
    <property type="entry name" value="ATP_transf"/>
    <property type="match status" value="1"/>
</dbReference>
<dbReference type="PIRSF" id="PIRSF000846">
    <property type="entry name" value="ATP_adenylyltr"/>
    <property type="match status" value="1"/>
</dbReference>
<dbReference type="SUPFAM" id="SSF54197">
    <property type="entry name" value="HIT-like"/>
    <property type="match status" value="1"/>
</dbReference>
<keyword id="KW-0002">3D-structure</keyword>
<keyword id="KW-0067">ATP-binding</keyword>
<keyword id="KW-0963">Cytoplasm</keyword>
<keyword id="KW-0903">Direct protein sequencing</keyword>
<keyword id="KW-0378">Hydrolase</keyword>
<keyword id="KW-0547">Nucleotide-binding</keyword>
<keyword id="KW-0548">Nucleotidyltransferase</keyword>
<keyword id="KW-0539">Nucleus</keyword>
<keyword id="KW-1185">Reference proteome</keyword>
<keyword id="KW-0808">Transferase</keyword>
<comment type="function">
    <text evidence="3">Ap4A phosphorylase catalyzes the phosphorolytic degradation of bis(5'-adenosyl) tetraphosphate (Ap4A) into ADP and ATP. Can also use other Np4N' nucleotides (where N and N' stand for A,C,G or U) as substrates, but prefers A-containing substrates. Cannot catalyze the reverse reaction. Additionally, this enzyme can also catalyze the phosphorolytic degradation of adenosine 5'-phosphosulfate (AMPS) into ADP and sulfate, the reversible exchange reaction between inorganic phosphate and the beta-phosphate of a nucleoside diphosphate (NDP), and the synthesis of Ap4A from AMPS plus ATP.</text>
</comment>
<comment type="catalytic activity">
    <reaction evidence="3 5 6">
        <text>ADP + ATP + H(+) = P(1),P(4)-bis(5'-adenosyl) tetraphosphate + phosphate</text>
        <dbReference type="Rhea" id="RHEA:16577"/>
        <dbReference type="ChEBI" id="CHEBI:15378"/>
        <dbReference type="ChEBI" id="CHEBI:30616"/>
        <dbReference type="ChEBI" id="CHEBI:43474"/>
        <dbReference type="ChEBI" id="CHEBI:58141"/>
        <dbReference type="ChEBI" id="CHEBI:456216"/>
        <dbReference type="EC" id="2.7.7.53"/>
    </reaction>
</comment>
<comment type="catalytic activity">
    <reaction evidence="3">
        <text>sulfate + ADP + H(+) = adenosine 5'-phosphosulfate + phosphate</text>
        <dbReference type="Rhea" id="RHEA:16529"/>
        <dbReference type="ChEBI" id="CHEBI:15378"/>
        <dbReference type="ChEBI" id="CHEBI:16189"/>
        <dbReference type="ChEBI" id="CHEBI:43474"/>
        <dbReference type="ChEBI" id="CHEBI:58243"/>
        <dbReference type="ChEBI" id="CHEBI:456216"/>
        <dbReference type="EC" id="2.7.7.5"/>
    </reaction>
</comment>
<comment type="cofactor">
    <cofactor evidence="3 4">
        <name>a divalent metal cation</name>
        <dbReference type="ChEBI" id="CHEBI:60240"/>
    </cofactor>
</comment>
<comment type="biophysicochemical properties">
    <kinetics>
        <KM evidence="4">4.5 uM for Ap4A</KM>
        <text evidence="4">kcat is 93.8 sec(-1) with Ap4A as substrate.</text>
    </kinetics>
    <phDependence>
        <text evidence="4">Optimum pH is 7.5.</text>
    </phDependence>
</comment>
<comment type="subunit">
    <text evidence="3 4">Monomer.</text>
</comment>
<comment type="subcellular location">
    <subcellularLocation>
        <location evidence="1">Cytoplasm</location>
    </subcellularLocation>
    <subcellularLocation>
        <location evidence="1">Nucleus</location>
    </subcellularLocation>
</comment>
<comment type="disruption phenotype">
    <text evidence="3">Inactivation of both APA1 and APA2 promotes a great increase in the cellular concentration of bis(5'-nuceleosidyl) tetraphosphate nucleotides.</text>
</comment>
<comment type="miscellaneous">
    <text evidence="2">Present with 1770 molecules/cell in log phase SD medium.</text>
</comment>
<comment type="similarity">
    <text evidence="8">Belongs to the ATP adenylyltransferase family.</text>
</comment>